<gene>
    <name type="ordered locus">At1g51860</name>
    <name type="ORF">T14L22.7</name>
</gene>
<sequence length="890" mass="99234">MKSLHWFLHLLIIAFTVLRSVEAQNQAGFISLDCGLVPKETTYTEKSTNITYKSDVDYIDSGLVGKINDAYKTQFQQQVWAVRSFPVGQRNCYNVNLTANNKYLIRGTFVYGNYDGLNQFPSFDLHIGPNKWSSVKILGVTNTSMHEIIHVVPQDSLEVCLVKTGPTTPFISSLEVRPLNNESYLTQSGSLMLFARVYFPSSSSSFIRYDEDIHDRVWNSFTDDETVWISTDLPIDTSNSYDMPQSVMKTAAVPKNASEPWLLWWTLDENTAQSYVYMHFAEVQNLTANETREFNITYNGGLRWFSYLRPPNLSISTIFNPRAVSSSNGIFNFTFAMTGNSTLPPLLNALEIYTVVDILQLETNKDEVSAMMNIKETYGLSKKISWQGDPCAPQLYRWEGLNCSYPDSEGSRIISLNLNGSELTGSITSDISKLTLLTVLDLSNNDLSGDIPTFFAEMKSLKLINLSGNPNLNLTAIPDSLQQRVNSKSLTLILGENLTLTPKKESKKVPMVAIAASVAGVFALLVILAIFFVIKRKNVKAHKSPGPPPLVTPGIVKSETRSSNPSIITRERKITYPEVLKMTNNFERVLGKGGFGTVYHGNLDGAEVAVKMLSHSSAQGYKEFKAEVELLLRVHHRHLVGLVGYCDDGDNLALIYEYMANGDLRENMSGKRGGNVLTWENRMQIAVEAAQGLEYLHNGCRPPMVHRDVKTTNILLNERCGAKLADFGLSRSFPIDGECHVSTVVAGTPGYLDPEYYRTNWLSEKSDVYSFGVVLLEIVTNQPVIDKTRERPHINDWVGFMLTKGDIKSIVDPKLMGDYDTNGAWKIVELALACVNPSSNRRPTMAHVVMELNDCVALENARRQGSEEMYSMGSVDYSLSSTSDFAPGAR</sequence>
<keyword id="KW-0067">ATP-binding</keyword>
<keyword id="KW-0325">Glycoprotein</keyword>
<keyword id="KW-0418">Kinase</keyword>
<keyword id="KW-0433">Leucine-rich repeat</keyword>
<keyword id="KW-0472">Membrane</keyword>
<keyword id="KW-0547">Nucleotide-binding</keyword>
<keyword id="KW-0597">Phosphoprotein</keyword>
<keyword id="KW-0675">Receptor</keyword>
<keyword id="KW-1185">Reference proteome</keyword>
<keyword id="KW-0677">Repeat</keyword>
<keyword id="KW-0723">Serine/threonine-protein kinase</keyword>
<keyword id="KW-0732">Signal</keyword>
<keyword id="KW-0808">Transferase</keyword>
<keyword id="KW-0812">Transmembrane</keyword>
<keyword id="KW-1133">Transmembrane helix</keyword>
<comment type="catalytic activity">
    <reaction>
        <text>L-seryl-[protein] + ATP = O-phospho-L-seryl-[protein] + ADP + H(+)</text>
        <dbReference type="Rhea" id="RHEA:17989"/>
        <dbReference type="Rhea" id="RHEA-COMP:9863"/>
        <dbReference type="Rhea" id="RHEA-COMP:11604"/>
        <dbReference type="ChEBI" id="CHEBI:15378"/>
        <dbReference type="ChEBI" id="CHEBI:29999"/>
        <dbReference type="ChEBI" id="CHEBI:30616"/>
        <dbReference type="ChEBI" id="CHEBI:83421"/>
        <dbReference type="ChEBI" id="CHEBI:456216"/>
        <dbReference type="EC" id="2.7.11.1"/>
    </reaction>
</comment>
<comment type="catalytic activity">
    <reaction>
        <text>L-threonyl-[protein] + ATP = O-phospho-L-threonyl-[protein] + ADP + H(+)</text>
        <dbReference type="Rhea" id="RHEA:46608"/>
        <dbReference type="Rhea" id="RHEA-COMP:11060"/>
        <dbReference type="Rhea" id="RHEA-COMP:11605"/>
        <dbReference type="ChEBI" id="CHEBI:15378"/>
        <dbReference type="ChEBI" id="CHEBI:30013"/>
        <dbReference type="ChEBI" id="CHEBI:30616"/>
        <dbReference type="ChEBI" id="CHEBI:61977"/>
        <dbReference type="ChEBI" id="CHEBI:456216"/>
        <dbReference type="EC" id="2.7.11.1"/>
    </reaction>
</comment>
<comment type="subcellular location">
    <subcellularLocation>
        <location evidence="5">Membrane</location>
        <topology evidence="5">Single-pass type I membrane protein</topology>
    </subcellularLocation>
</comment>
<comment type="similarity">
    <text evidence="3">Belongs to the protein kinase superfamily. Ser/Thr protein kinase family.</text>
</comment>
<comment type="sequence caution" evidence="5">
    <conflict type="erroneous gene model prediction">
        <sequence resource="EMBL-CDS" id="AAF99856"/>
    </conflict>
</comment>
<feature type="signal peptide" evidence="2">
    <location>
        <begin position="1"/>
        <end position="23"/>
    </location>
</feature>
<feature type="chain" id="PRO_0000387527" description="Probable LRR receptor-like serine/threonine-protein kinase At1g51860">
    <location>
        <begin position="24"/>
        <end position="890"/>
    </location>
</feature>
<feature type="topological domain" description="Extracellular" evidence="2">
    <location>
        <begin position="24"/>
        <end position="513"/>
    </location>
</feature>
<feature type="transmembrane region" description="Helical" evidence="2">
    <location>
        <begin position="514"/>
        <end position="534"/>
    </location>
</feature>
<feature type="topological domain" description="Cytoplasmic" evidence="2">
    <location>
        <begin position="535"/>
        <end position="890"/>
    </location>
</feature>
<feature type="repeat" description="LRR 1">
    <location>
        <begin position="412"/>
        <end position="435"/>
    </location>
</feature>
<feature type="repeat" description="LRR 2">
    <location>
        <begin position="436"/>
        <end position="458"/>
    </location>
</feature>
<feature type="repeat" description="LRR 3">
    <location>
        <begin position="460"/>
        <end position="481"/>
    </location>
</feature>
<feature type="domain" description="Protein kinase" evidence="3">
    <location>
        <begin position="584"/>
        <end position="856"/>
    </location>
</feature>
<feature type="active site" description="Proton acceptor" evidence="3 4">
    <location>
        <position position="708"/>
    </location>
</feature>
<feature type="binding site" evidence="3">
    <location>
        <begin position="590"/>
        <end position="598"/>
    </location>
    <ligand>
        <name>ATP</name>
        <dbReference type="ChEBI" id="CHEBI:30616"/>
    </ligand>
</feature>
<feature type="binding site" evidence="3">
    <location>
        <position position="611"/>
    </location>
    <ligand>
        <name>ATP</name>
        <dbReference type="ChEBI" id="CHEBI:30616"/>
    </ligand>
</feature>
<feature type="modified residue" description="Phosphothreonine" evidence="1">
    <location>
        <position position="575"/>
    </location>
</feature>
<feature type="modified residue" description="Phosphotyrosine" evidence="1">
    <location>
        <position position="656"/>
    </location>
</feature>
<feature type="modified residue" description="Phosphoserine" evidence="1">
    <location>
        <position position="742"/>
    </location>
</feature>
<feature type="modified residue" description="Phosphothreonine" evidence="1">
    <location>
        <position position="743"/>
    </location>
</feature>
<feature type="modified residue" description="Phosphothreonine" evidence="1">
    <location>
        <position position="748"/>
    </location>
</feature>
<feature type="modified residue" description="Phosphotyrosine" evidence="1">
    <location>
        <position position="756"/>
    </location>
</feature>
<feature type="glycosylation site" description="N-linked (GlcNAc...) asparagine" evidence="2">
    <location>
        <position position="49"/>
    </location>
</feature>
<feature type="glycosylation site" description="N-linked (GlcNAc...) asparagine" evidence="2">
    <location>
        <position position="96"/>
    </location>
</feature>
<feature type="glycosylation site" description="N-linked (GlcNAc...) asparagine" evidence="2">
    <location>
        <position position="142"/>
    </location>
</feature>
<feature type="glycosylation site" description="N-linked (GlcNAc...) asparagine" evidence="2">
    <location>
        <position position="181"/>
    </location>
</feature>
<feature type="glycosylation site" description="N-linked (GlcNAc...) asparagine" evidence="2">
    <location>
        <position position="256"/>
    </location>
</feature>
<feature type="glycosylation site" description="N-linked (GlcNAc...) asparagine" evidence="2">
    <location>
        <position position="285"/>
    </location>
</feature>
<feature type="glycosylation site" description="N-linked (GlcNAc...) asparagine" evidence="2">
    <location>
        <position position="289"/>
    </location>
</feature>
<feature type="glycosylation site" description="N-linked (GlcNAc...) asparagine" evidence="2">
    <location>
        <position position="295"/>
    </location>
</feature>
<feature type="glycosylation site" description="N-linked (GlcNAc...) asparagine" evidence="2">
    <location>
        <position position="312"/>
    </location>
</feature>
<feature type="glycosylation site" description="N-linked (GlcNAc...) asparagine" evidence="2">
    <location>
        <position position="332"/>
    </location>
</feature>
<feature type="glycosylation site" description="N-linked (GlcNAc...) asparagine" evidence="2">
    <location>
        <position position="340"/>
    </location>
</feature>
<feature type="glycosylation site" description="N-linked (GlcNAc...) asparagine" evidence="2">
    <location>
        <position position="402"/>
    </location>
</feature>
<feature type="glycosylation site" description="N-linked (GlcNAc...) asparagine" evidence="2">
    <location>
        <position position="419"/>
    </location>
</feature>
<feature type="glycosylation site" description="N-linked (GlcNAc...) asparagine" evidence="2">
    <location>
        <position position="465"/>
    </location>
</feature>
<feature type="glycosylation site" description="N-linked (GlcNAc...) asparagine" evidence="2">
    <location>
        <position position="473"/>
    </location>
</feature>
<feature type="glycosylation site" description="N-linked (GlcNAc...) asparagine" evidence="2">
    <location>
        <position position="497"/>
    </location>
</feature>
<accession>C0LGG4</accession>
<accession>Q9FZB3</accession>
<name>Y1518_ARATH</name>
<proteinExistence type="evidence at transcript level"/>
<dbReference type="EC" id="2.7.11.1"/>
<dbReference type="EMBL" id="AC015448">
    <property type="protein sequence ID" value="AAF99856.1"/>
    <property type="status" value="ALT_SEQ"/>
    <property type="molecule type" value="Genomic_DNA"/>
</dbReference>
<dbReference type="EMBL" id="CP002684">
    <property type="protein sequence ID" value="AEE32726.1"/>
    <property type="molecule type" value="Genomic_DNA"/>
</dbReference>
<dbReference type="EMBL" id="FJ708653">
    <property type="protein sequence ID" value="ACN59249.1"/>
    <property type="molecule type" value="mRNA"/>
</dbReference>
<dbReference type="PIR" id="A96558">
    <property type="entry name" value="A96558"/>
</dbReference>
<dbReference type="RefSeq" id="NP_175598.1">
    <property type="nucleotide sequence ID" value="NM_104066.2"/>
</dbReference>
<dbReference type="SMR" id="C0LGG4"/>
<dbReference type="STRING" id="3702.C0LGG4"/>
<dbReference type="GlyGen" id="C0LGG4">
    <property type="glycosylation" value="19 sites"/>
</dbReference>
<dbReference type="iPTMnet" id="C0LGG4"/>
<dbReference type="PaxDb" id="3702-AT1G51860.1"/>
<dbReference type="ProteomicsDB" id="242984"/>
<dbReference type="EnsemblPlants" id="AT1G51860.1">
    <property type="protein sequence ID" value="AT1G51860.1"/>
    <property type="gene ID" value="AT1G51860"/>
</dbReference>
<dbReference type="GeneID" id="841613"/>
<dbReference type="Gramene" id="AT1G51860.1">
    <property type="protein sequence ID" value="AT1G51860.1"/>
    <property type="gene ID" value="AT1G51860"/>
</dbReference>
<dbReference type="KEGG" id="ath:AT1G51860"/>
<dbReference type="Araport" id="AT1G51860"/>
<dbReference type="TAIR" id="AT1G51860"/>
<dbReference type="HOGENOM" id="CLU_000288_41_1_1"/>
<dbReference type="InParanoid" id="C0LGG4"/>
<dbReference type="PhylomeDB" id="C0LGG4"/>
<dbReference type="PRO" id="PR:C0LGG4"/>
<dbReference type="Proteomes" id="UP000006548">
    <property type="component" value="Chromosome 1"/>
</dbReference>
<dbReference type="ExpressionAtlas" id="C0LGG4">
    <property type="expression patterns" value="baseline and differential"/>
</dbReference>
<dbReference type="GO" id="GO:0016020">
    <property type="term" value="C:membrane"/>
    <property type="evidence" value="ECO:0007669"/>
    <property type="project" value="UniProtKB-SubCell"/>
</dbReference>
<dbReference type="GO" id="GO:0005524">
    <property type="term" value="F:ATP binding"/>
    <property type="evidence" value="ECO:0007669"/>
    <property type="project" value="UniProtKB-KW"/>
</dbReference>
<dbReference type="GO" id="GO:0106310">
    <property type="term" value="F:protein serine kinase activity"/>
    <property type="evidence" value="ECO:0007669"/>
    <property type="project" value="RHEA"/>
</dbReference>
<dbReference type="GO" id="GO:0004674">
    <property type="term" value="F:protein serine/threonine kinase activity"/>
    <property type="evidence" value="ECO:0007669"/>
    <property type="project" value="UniProtKB-KW"/>
</dbReference>
<dbReference type="CDD" id="cd14066">
    <property type="entry name" value="STKc_IRAK"/>
    <property type="match status" value="1"/>
</dbReference>
<dbReference type="FunFam" id="3.80.10.10:FF:000129">
    <property type="entry name" value="Leucine-rich repeat receptor-like kinase"/>
    <property type="match status" value="1"/>
</dbReference>
<dbReference type="FunFam" id="3.30.200.20:FF:000394">
    <property type="entry name" value="Leucine-rich repeat receptor-like protein kinase"/>
    <property type="match status" value="1"/>
</dbReference>
<dbReference type="FunFam" id="1.10.510.10:FF:000146">
    <property type="entry name" value="LRR receptor-like serine/threonine-protein kinase IOS1"/>
    <property type="match status" value="1"/>
</dbReference>
<dbReference type="Gene3D" id="3.30.200.20">
    <property type="entry name" value="Phosphorylase Kinase, domain 1"/>
    <property type="match status" value="1"/>
</dbReference>
<dbReference type="Gene3D" id="3.80.10.10">
    <property type="entry name" value="Ribonuclease Inhibitor"/>
    <property type="match status" value="1"/>
</dbReference>
<dbReference type="Gene3D" id="1.10.510.10">
    <property type="entry name" value="Transferase(Phosphotransferase) domain 1"/>
    <property type="match status" value="1"/>
</dbReference>
<dbReference type="InterPro" id="IPR011009">
    <property type="entry name" value="Kinase-like_dom_sf"/>
</dbReference>
<dbReference type="InterPro" id="IPR001611">
    <property type="entry name" value="Leu-rich_rpt"/>
</dbReference>
<dbReference type="InterPro" id="IPR032675">
    <property type="entry name" value="LRR_dom_sf"/>
</dbReference>
<dbReference type="InterPro" id="IPR024788">
    <property type="entry name" value="Malectin-like_Carb-bd_dom"/>
</dbReference>
<dbReference type="InterPro" id="IPR000719">
    <property type="entry name" value="Prot_kinase_dom"/>
</dbReference>
<dbReference type="InterPro" id="IPR017441">
    <property type="entry name" value="Protein_kinase_ATP_BS"/>
</dbReference>
<dbReference type="InterPro" id="IPR001245">
    <property type="entry name" value="Ser-Thr/Tyr_kinase_cat_dom"/>
</dbReference>
<dbReference type="InterPro" id="IPR008271">
    <property type="entry name" value="Ser/Thr_kinase_AS"/>
</dbReference>
<dbReference type="PANTHER" id="PTHR45631">
    <property type="entry name" value="OS07G0107800 PROTEIN-RELATED"/>
    <property type="match status" value="1"/>
</dbReference>
<dbReference type="PANTHER" id="PTHR45631:SF193">
    <property type="entry name" value="PROTEIN KINASE FAMILY PROTEIN"/>
    <property type="match status" value="1"/>
</dbReference>
<dbReference type="Pfam" id="PF00560">
    <property type="entry name" value="LRR_1"/>
    <property type="match status" value="1"/>
</dbReference>
<dbReference type="Pfam" id="PF12819">
    <property type="entry name" value="Malectin_like"/>
    <property type="match status" value="1"/>
</dbReference>
<dbReference type="Pfam" id="PF07714">
    <property type="entry name" value="PK_Tyr_Ser-Thr"/>
    <property type="match status" value="1"/>
</dbReference>
<dbReference type="SMART" id="SM00220">
    <property type="entry name" value="S_TKc"/>
    <property type="match status" value="1"/>
</dbReference>
<dbReference type="SUPFAM" id="SSF52058">
    <property type="entry name" value="L domain-like"/>
    <property type="match status" value="1"/>
</dbReference>
<dbReference type="SUPFAM" id="SSF56112">
    <property type="entry name" value="Protein kinase-like (PK-like)"/>
    <property type="match status" value="1"/>
</dbReference>
<dbReference type="PROSITE" id="PS00107">
    <property type="entry name" value="PROTEIN_KINASE_ATP"/>
    <property type="match status" value="1"/>
</dbReference>
<dbReference type="PROSITE" id="PS50011">
    <property type="entry name" value="PROTEIN_KINASE_DOM"/>
    <property type="match status" value="1"/>
</dbReference>
<dbReference type="PROSITE" id="PS00108">
    <property type="entry name" value="PROTEIN_KINASE_ST"/>
    <property type="match status" value="1"/>
</dbReference>
<organism>
    <name type="scientific">Arabidopsis thaliana</name>
    <name type="common">Mouse-ear cress</name>
    <dbReference type="NCBI Taxonomy" id="3702"/>
    <lineage>
        <taxon>Eukaryota</taxon>
        <taxon>Viridiplantae</taxon>
        <taxon>Streptophyta</taxon>
        <taxon>Embryophyta</taxon>
        <taxon>Tracheophyta</taxon>
        <taxon>Spermatophyta</taxon>
        <taxon>Magnoliopsida</taxon>
        <taxon>eudicotyledons</taxon>
        <taxon>Gunneridae</taxon>
        <taxon>Pentapetalae</taxon>
        <taxon>rosids</taxon>
        <taxon>malvids</taxon>
        <taxon>Brassicales</taxon>
        <taxon>Brassicaceae</taxon>
        <taxon>Camelineae</taxon>
        <taxon>Arabidopsis</taxon>
    </lineage>
</organism>
<protein>
    <recommendedName>
        <fullName>Probable LRR receptor-like serine/threonine-protein kinase At1g51860</fullName>
        <ecNumber>2.7.11.1</ecNumber>
    </recommendedName>
</protein>
<evidence type="ECO:0000250" key="1">
    <source>
        <dbReference type="UniProtKB" id="O48814"/>
    </source>
</evidence>
<evidence type="ECO:0000255" key="2"/>
<evidence type="ECO:0000255" key="3">
    <source>
        <dbReference type="PROSITE-ProRule" id="PRU00159"/>
    </source>
</evidence>
<evidence type="ECO:0000255" key="4">
    <source>
        <dbReference type="PROSITE-ProRule" id="PRU10027"/>
    </source>
</evidence>
<evidence type="ECO:0000305" key="5"/>
<reference key="1">
    <citation type="journal article" date="2000" name="Nature">
        <title>Sequence and analysis of chromosome 1 of the plant Arabidopsis thaliana.</title>
        <authorList>
            <person name="Theologis A."/>
            <person name="Ecker J.R."/>
            <person name="Palm C.J."/>
            <person name="Federspiel N.A."/>
            <person name="Kaul S."/>
            <person name="White O."/>
            <person name="Alonso J."/>
            <person name="Altafi H."/>
            <person name="Araujo R."/>
            <person name="Bowman C.L."/>
            <person name="Brooks S.Y."/>
            <person name="Buehler E."/>
            <person name="Chan A."/>
            <person name="Chao Q."/>
            <person name="Chen H."/>
            <person name="Cheuk R.F."/>
            <person name="Chin C.W."/>
            <person name="Chung M.K."/>
            <person name="Conn L."/>
            <person name="Conway A.B."/>
            <person name="Conway A.R."/>
            <person name="Creasy T.H."/>
            <person name="Dewar K."/>
            <person name="Dunn P."/>
            <person name="Etgu P."/>
            <person name="Feldblyum T.V."/>
            <person name="Feng J.-D."/>
            <person name="Fong B."/>
            <person name="Fujii C.Y."/>
            <person name="Gill J.E."/>
            <person name="Goldsmith A.D."/>
            <person name="Haas B."/>
            <person name="Hansen N.F."/>
            <person name="Hughes B."/>
            <person name="Huizar L."/>
            <person name="Hunter J.L."/>
            <person name="Jenkins J."/>
            <person name="Johnson-Hopson C."/>
            <person name="Khan S."/>
            <person name="Khaykin E."/>
            <person name="Kim C.J."/>
            <person name="Koo H.L."/>
            <person name="Kremenetskaia I."/>
            <person name="Kurtz D.B."/>
            <person name="Kwan A."/>
            <person name="Lam B."/>
            <person name="Langin-Hooper S."/>
            <person name="Lee A."/>
            <person name="Lee J.M."/>
            <person name="Lenz C.A."/>
            <person name="Li J.H."/>
            <person name="Li Y.-P."/>
            <person name="Lin X."/>
            <person name="Liu S.X."/>
            <person name="Liu Z.A."/>
            <person name="Luros J.S."/>
            <person name="Maiti R."/>
            <person name="Marziali A."/>
            <person name="Militscher J."/>
            <person name="Miranda M."/>
            <person name="Nguyen M."/>
            <person name="Nierman W.C."/>
            <person name="Osborne B.I."/>
            <person name="Pai G."/>
            <person name="Peterson J."/>
            <person name="Pham P.K."/>
            <person name="Rizzo M."/>
            <person name="Rooney T."/>
            <person name="Rowley D."/>
            <person name="Sakano H."/>
            <person name="Salzberg S.L."/>
            <person name="Schwartz J.R."/>
            <person name="Shinn P."/>
            <person name="Southwick A.M."/>
            <person name="Sun H."/>
            <person name="Tallon L.J."/>
            <person name="Tambunga G."/>
            <person name="Toriumi M.J."/>
            <person name="Town C.D."/>
            <person name="Utterback T."/>
            <person name="Van Aken S."/>
            <person name="Vaysberg M."/>
            <person name="Vysotskaia V.S."/>
            <person name="Walker M."/>
            <person name="Wu D."/>
            <person name="Yu G."/>
            <person name="Fraser C.M."/>
            <person name="Venter J.C."/>
            <person name="Davis R.W."/>
        </authorList>
    </citation>
    <scope>NUCLEOTIDE SEQUENCE [LARGE SCALE GENOMIC DNA]</scope>
    <source>
        <strain>cv. Columbia</strain>
    </source>
</reference>
<reference key="2">
    <citation type="journal article" date="2017" name="Plant J.">
        <title>Araport11: a complete reannotation of the Arabidopsis thaliana reference genome.</title>
        <authorList>
            <person name="Cheng C.Y."/>
            <person name="Krishnakumar V."/>
            <person name="Chan A.P."/>
            <person name="Thibaud-Nissen F."/>
            <person name="Schobel S."/>
            <person name="Town C.D."/>
        </authorList>
    </citation>
    <scope>GENOME REANNOTATION</scope>
    <source>
        <strain>cv. Columbia</strain>
    </source>
</reference>
<reference key="3">
    <citation type="journal article" date="2010" name="BMC Genomics">
        <title>Genome-wide cloning and sequence analysis of leucine-rich repeat receptor-like protein kinase genes in Arabidopsis thaliana.</title>
        <authorList>
            <person name="Gou X."/>
            <person name="He K."/>
            <person name="Yang H."/>
            <person name="Yuan T."/>
            <person name="Lin H."/>
            <person name="Clouse S.D."/>
            <person name="Li J."/>
        </authorList>
    </citation>
    <scope>NUCLEOTIDE SEQUENCE [LARGE SCALE MRNA] OF 243-890</scope>
    <source>
        <strain>cv. Columbia</strain>
    </source>
</reference>